<dbReference type="EMBL" id="CH902620">
    <property type="protein sequence ID" value="EDV32239.1"/>
    <property type="molecule type" value="Genomic_DNA"/>
</dbReference>
<dbReference type="SMR" id="B3MPC0"/>
<dbReference type="FunCoup" id="B3MPC0">
    <property type="interactions" value="1256"/>
</dbReference>
<dbReference type="STRING" id="7217.B3MPC0"/>
<dbReference type="EnsemblMetazoa" id="FBtr0120431">
    <property type="protein sequence ID" value="FBpp0118923"/>
    <property type="gene ID" value="FBgn0092755"/>
</dbReference>
<dbReference type="EnsemblMetazoa" id="XM_001962982.4">
    <property type="protein sequence ID" value="XP_001963018.1"/>
    <property type="gene ID" value="LOC6498536"/>
</dbReference>
<dbReference type="GeneID" id="6498536"/>
<dbReference type="KEGG" id="dan:6498536"/>
<dbReference type="eggNOG" id="KOG2185">
    <property type="taxonomic scope" value="Eukaryota"/>
</dbReference>
<dbReference type="HOGENOM" id="CLU_040504_1_0_1"/>
<dbReference type="InParanoid" id="B3MPC0"/>
<dbReference type="OMA" id="QYTRGIG"/>
<dbReference type="OrthoDB" id="5842926at2759"/>
<dbReference type="PhylomeDB" id="B3MPC0"/>
<dbReference type="Proteomes" id="UP000007801">
    <property type="component" value="Unassembled WGS sequence"/>
</dbReference>
<dbReference type="GO" id="GO:0005634">
    <property type="term" value="C:nucleus"/>
    <property type="evidence" value="ECO:0007669"/>
    <property type="project" value="UniProtKB-SubCell"/>
</dbReference>
<dbReference type="GO" id="GO:0001227">
    <property type="term" value="F:DNA-binding transcription repressor activity, RNA polymerase II-specific"/>
    <property type="evidence" value="ECO:0007669"/>
    <property type="project" value="TreeGrafter"/>
</dbReference>
<dbReference type="GO" id="GO:0000978">
    <property type="term" value="F:RNA polymerase II cis-regulatory region sequence-specific DNA binding"/>
    <property type="evidence" value="ECO:0007669"/>
    <property type="project" value="TreeGrafter"/>
</dbReference>
<dbReference type="GO" id="GO:0008270">
    <property type="term" value="F:zinc ion binding"/>
    <property type="evidence" value="ECO:0007669"/>
    <property type="project" value="UniProtKB-KW"/>
</dbReference>
<dbReference type="Gene3D" id="2.30.30.1190">
    <property type="match status" value="1"/>
</dbReference>
<dbReference type="InterPro" id="IPR000467">
    <property type="entry name" value="G_patch_dom"/>
</dbReference>
<dbReference type="InterPro" id="IPR000571">
    <property type="entry name" value="Znf_CCCH"/>
</dbReference>
<dbReference type="PANTHER" id="PTHR46297">
    <property type="entry name" value="ZINC FINGER CCCH-TYPE WITH G PATCH DOMAIN-CONTAINING PROTEIN"/>
    <property type="match status" value="1"/>
</dbReference>
<dbReference type="PANTHER" id="PTHR46297:SF1">
    <property type="entry name" value="ZINC FINGER CCCH-TYPE WITH G PATCH DOMAIN-CONTAINING PROTEIN"/>
    <property type="match status" value="1"/>
</dbReference>
<dbReference type="Pfam" id="PF01585">
    <property type="entry name" value="G-patch"/>
    <property type="match status" value="1"/>
</dbReference>
<dbReference type="SMART" id="SM00443">
    <property type="entry name" value="G_patch"/>
    <property type="match status" value="1"/>
</dbReference>
<dbReference type="PROSITE" id="PS50174">
    <property type="entry name" value="G_PATCH"/>
    <property type="match status" value="1"/>
</dbReference>
<dbReference type="PROSITE" id="PS50103">
    <property type="entry name" value="ZF_C3H1"/>
    <property type="match status" value="1"/>
</dbReference>
<accession>B3MPC0</accession>
<feature type="chain" id="PRO_0000385200" description="Zinc finger CCCH-type with G patch domain-containing protein">
    <location>
        <begin position="1"/>
        <end position="511"/>
    </location>
</feature>
<feature type="domain" description="G-patch" evidence="2">
    <location>
        <begin position="311"/>
        <end position="357"/>
    </location>
</feature>
<feature type="zinc finger region" description="C3H1-type" evidence="3">
    <location>
        <begin position="157"/>
        <end position="180"/>
    </location>
</feature>
<feature type="region of interest" description="Disordered" evidence="4">
    <location>
        <begin position="254"/>
        <end position="281"/>
    </location>
</feature>
<feature type="region of interest" description="Disordered" evidence="4">
    <location>
        <begin position="409"/>
        <end position="433"/>
    </location>
</feature>
<feature type="region of interest" description="Disordered" evidence="4">
    <location>
        <begin position="478"/>
        <end position="511"/>
    </location>
</feature>
<feature type="compositionally biased region" description="Acidic residues" evidence="4">
    <location>
        <begin position="271"/>
        <end position="281"/>
    </location>
</feature>
<feature type="compositionally biased region" description="Basic and acidic residues" evidence="4">
    <location>
        <begin position="414"/>
        <end position="425"/>
    </location>
</feature>
<feature type="compositionally biased region" description="Polar residues" evidence="4">
    <location>
        <begin position="478"/>
        <end position="493"/>
    </location>
</feature>
<feature type="compositionally biased region" description="Basic and acidic residues" evidence="4">
    <location>
        <begin position="494"/>
        <end position="511"/>
    </location>
</feature>
<organism>
    <name type="scientific">Drosophila ananassae</name>
    <name type="common">Fruit fly</name>
    <dbReference type="NCBI Taxonomy" id="7217"/>
    <lineage>
        <taxon>Eukaryota</taxon>
        <taxon>Metazoa</taxon>
        <taxon>Ecdysozoa</taxon>
        <taxon>Arthropoda</taxon>
        <taxon>Hexapoda</taxon>
        <taxon>Insecta</taxon>
        <taxon>Pterygota</taxon>
        <taxon>Neoptera</taxon>
        <taxon>Endopterygota</taxon>
        <taxon>Diptera</taxon>
        <taxon>Brachycera</taxon>
        <taxon>Muscomorpha</taxon>
        <taxon>Ephydroidea</taxon>
        <taxon>Drosophilidae</taxon>
        <taxon>Drosophila</taxon>
        <taxon>Sophophora</taxon>
    </lineage>
</organism>
<evidence type="ECO:0000250" key="1"/>
<evidence type="ECO:0000255" key="2">
    <source>
        <dbReference type="PROSITE-ProRule" id="PRU00092"/>
    </source>
</evidence>
<evidence type="ECO:0000255" key="3">
    <source>
        <dbReference type="PROSITE-ProRule" id="PRU00723"/>
    </source>
</evidence>
<evidence type="ECO:0000256" key="4">
    <source>
        <dbReference type="SAM" id="MobiDB-lite"/>
    </source>
</evidence>
<keyword id="KW-0238">DNA-binding</keyword>
<keyword id="KW-0479">Metal-binding</keyword>
<keyword id="KW-0539">Nucleus</keyword>
<keyword id="KW-1185">Reference proteome</keyword>
<keyword id="KW-0678">Repressor</keyword>
<keyword id="KW-0804">Transcription</keyword>
<keyword id="KW-0805">Transcription regulation</keyword>
<keyword id="KW-0862">Zinc</keyword>
<keyword id="KW-0863">Zinc-finger</keyword>
<protein>
    <recommendedName>
        <fullName>Zinc finger CCCH-type with G patch domain-containing protein</fullName>
    </recommendedName>
</protein>
<proteinExistence type="inferred from homology"/>
<comment type="function">
    <text evidence="1">Transcription repressor.</text>
</comment>
<comment type="subcellular location">
    <subcellularLocation>
        <location evidence="1">Nucleus</location>
    </subcellularLocation>
</comment>
<reference key="1">
    <citation type="journal article" date="2007" name="Nature">
        <title>Evolution of genes and genomes on the Drosophila phylogeny.</title>
        <authorList>
            <consortium name="Drosophila 12 genomes consortium"/>
        </authorList>
    </citation>
    <scope>NUCLEOTIDE SEQUENCE [LARGE SCALE GENOMIC DNA]</scope>
    <source>
        <strain>Tucson 14024-0371.13</strain>
    </source>
</reference>
<sequence length="511" mass="58132">MDEYEAQLLVVEQALENATDEHQRQELLALKENLQELLSLTRGGTEDDAATDDDSQNADNLDNELERLKSELNDMEATGASKSNENEVQQLADLRTKYSSMVGEKCSAPHEHSWGAISYHNALICGVDDEVIINGDGALDARLRVLFTNPTHREMLPCSYYLEGECRFDEARCRYSHGALVTGSSIRKYNPPDFHKLSRSCPVLAQLPDRLWHRGRVLCVNFVEQVCRVRLDGQDHKERERDFKFEELFPLTTDQEDELTSEDSSSVNDGSSDEEESDMDDLEAARRARMVELSLFTFKPTEKLGAWEEYTRGIGSKLMEKMGYIHGTGLGSDGRGIVTPVSAQILPKGRSLDACMELREAANGDKDYFSVERKLQRAQRRQKKANEKAYVRESQRTDVFSFLNSSVLGSDNKQQAEPEAKKAKANDLQQHSTKTLNVETVRIADDIRRKQRDIAKVQQSLDRNTGDVQLQKRLQAQMHNQKQELATLQAQERSLSKEQQTRKSKNKMFEF</sequence>
<name>ZGPAT_DROAN</name>
<gene>
    <name type="ORF">GF15731</name>
</gene>